<name>PEPQ_LACDL</name>
<proteinExistence type="inferred from homology"/>
<comment type="catalytic activity">
    <reaction>
        <text>Xaa-L-Pro dipeptide + H2O = an L-alpha-amino acid + L-proline</text>
        <dbReference type="Rhea" id="RHEA:76407"/>
        <dbReference type="ChEBI" id="CHEBI:15377"/>
        <dbReference type="ChEBI" id="CHEBI:59869"/>
        <dbReference type="ChEBI" id="CHEBI:60039"/>
        <dbReference type="ChEBI" id="CHEBI:195196"/>
        <dbReference type="EC" id="3.4.13.9"/>
    </reaction>
</comment>
<comment type="cofactor">
    <cofactor evidence="1">
        <name>Mn(2+)</name>
        <dbReference type="ChEBI" id="CHEBI:29035"/>
    </cofactor>
    <text evidence="1">Binds 2 manganese ions per subunit.</text>
</comment>
<comment type="subcellular location">
    <subcellularLocation>
        <location evidence="2">Cytoplasm</location>
    </subcellularLocation>
</comment>
<comment type="similarity">
    <text evidence="2">Belongs to the peptidase M24B family.</text>
</comment>
<accession>P46545</accession>
<organism>
    <name type="scientific">Lactobacillus delbrueckii subsp. lactis</name>
    <dbReference type="NCBI Taxonomy" id="29397"/>
    <lineage>
        <taxon>Bacteria</taxon>
        <taxon>Bacillati</taxon>
        <taxon>Bacillota</taxon>
        <taxon>Bacilli</taxon>
        <taxon>Lactobacillales</taxon>
        <taxon>Lactobacillaceae</taxon>
        <taxon>Lactobacillus</taxon>
    </lineage>
</organism>
<gene>
    <name type="primary">pepQ</name>
</gene>
<reference key="1">
    <citation type="journal article" date="1995" name="Mol. Gen. Genet.">
        <title>Cloning and DNA sequence analysis of pepQ, a prolidase gene from Lactobacillus delbrueckii subsp. lactis DSM7290 and partial characterization of its product.</title>
        <authorList>
            <person name="Stucky K."/>
            <person name="Klein J.R."/>
            <person name="Schueller A."/>
            <person name="Matern H."/>
            <person name="Henrich B."/>
            <person name="Plapp R."/>
        </authorList>
    </citation>
    <scope>NUCLEOTIDE SEQUENCE [GENOMIC DNA]</scope>
    <source>
        <strain>DSM 7290</strain>
    </source>
</reference>
<reference key="2">
    <citation type="journal article" date="1994" name="FEMS Microbiol. Lett.">
        <title>Cloning and nucleotide sequence analysis of the Lactobacillus delbrueckii ssp. lactis DSM7290 cysteine aminopeptidase gene pepC.</title>
        <authorList>
            <person name="Klein J."/>
            <person name="Henrich B."/>
            <person name="Plapp R."/>
        </authorList>
    </citation>
    <scope>NUCLEOTIDE SEQUENCE [GENOMIC DNA]</scope>
    <source>
        <strain>DSM 7290</strain>
    </source>
</reference>
<keyword id="KW-0963">Cytoplasm</keyword>
<keyword id="KW-0224">Dipeptidase</keyword>
<keyword id="KW-0378">Hydrolase</keyword>
<keyword id="KW-0464">Manganese</keyword>
<keyword id="KW-0479">Metal-binding</keyword>
<keyword id="KW-0482">Metalloprotease</keyword>
<keyword id="KW-0645">Protease</keyword>
<protein>
    <recommendedName>
        <fullName>Xaa-Pro dipeptidase</fullName>
        <shortName>X-Pro dipeptidase</shortName>
        <ecNumber>3.4.13.9</ecNumber>
    </recommendedName>
    <alternativeName>
        <fullName>Imidodipeptidase</fullName>
    </alternativeName>
    <alternativeName>
        <fullName>Proline dipeptidase</fullName>
        <shortName>Prolidase</shortName>
    </alternativeName>
</protein>
<dbReference type="EC" id="3.4.13.9"/>
<dbReference type="EMBL" id="Z34896">
    <property type="protein sequence ID" value="CAA84379.1"/>
    <property type="molecule type" value="Genomic_DNA"/>
</dbReference>
<dbReference type="EMBL" id="Z54205">
    <property type="protein sequence ID" value="CAA90911.1"/>
    <property type="molecule type" value="Genomic_DNA"/>
</dbReference>
<dbReference type="PIR" id="S55037">
    <property type="entry name" value="S52202"/>
</dbReference>
<dbReference type="RefSeq" id="WP_002876588.1">
    <property type="nucleotide sequence ID" value="NZ_BJLK01000008.1"/>
</dbReference>
<dbReference type="SMR" id="P46545"/>
<dbReference type="MEROPS" id="M24.006"/>
<dbReference type="GeneID" id="69669380"/>
<dbReference type="GO" id="GO:0005737">
    <property type="term" value="C:cytoplasm"/>
    <property type="evidence" value="ECO:0007669"/>
    <property type="project" value="UniProtKB-SubCell"/>
</dbReference>
<dbReference type="GO" id="GO:0046872">
    <property type="term" value="F:metal ion binding"/>
    <property type="evidence" value="ECO:0007669"/>
    <property type="project" value="UniProtKB-KW"/>
</dbReference>
<dbReference type="GO" id="GO:0008237">
    <property type="term" value="F:metallopeptidase activity"/>
    <property type="evidence" value="ECO:0007669"/>
    <property type="project" value="UniProtKB-KW"/>
</dbReference>
<dbReference type="GO" id="GO:0102009">
    <property type="term" value="F:proline dipeptidase activity"/>
    <property type="evidence" value="ECO:0007669"/>
    <property type="project" value="UniProtKB-EC"/>
</dbReference>
<dbReference type="GO" id="GO:0006508">
    <property type="term" value="P:proteolysis"/>
    <property type="evidence" value="ECO:0007669"/>
    <property type="project" value="UniProtKB-KW"/>
</dbReference>
<dbReference type="CDD" id="cd01092">
    <property type="entry name" value="APP-like"/>
    <property type="match status" value="1"/>
</dbReference>
<dbReference type="Gene3D" id="3.90.230.10">
    <property type="entry name" value="Creatinase/methionine aminopeptidase superfamily"/>
    <property type="match status" value="1"/>
</dbReference>
<dbReference type="Gene3D" id="3.40.350.10">
    <property type="entry name" value="Creatinase/prolidase N-terminal domain"/>
    <property type="match status" value="1"/>
</dbReference>
<dbReference type="InterPro" id="IPR029149">
    <property type="entry name" value="Creatin/AminoP/Spt16_N"/>
</dbReference>
<dbReference type="InterPro" id="IPR036005">
    <property type="entry name" value="Creatinase/aminopeptidase-like"/>
</dbReference>
<dbReference type="InterPro" id="IPR000587">
    <property type="entry name" value="Creatinase_N"/>
</dbReference>
<dbReference type="InterPro" id="IPR000994">
    <property type="entry name" value="Pept_M24"/>
</dbReference>
<dbReference type="InterPro" id="IPR050659">
    <property type="entry name" value="Peptidase_M24B"/>
</dbReference>
<dbReference type="InterPro" id="IPR001131">
    <property type="entry name" value="Peptidase_M24B_aminopep-P_CS"/>
</dbReference>
<dbReference type="PANTHER" id="PTHR46112">
    <property type="entry name" value="AMINOPEPTIDASE"/>
    <property type="match status" value="1"/>
</dbReference>
<dbReference type="PANTHER" id="PTHR46112:SF10">
    <property type="entry name" value="DIPEPTIDASE YKVY-RELATED"/>
    <property type="match status" value="1"/>
</dbReference>
<dbReference type="Pfam" id="PF01321">
    <property type="entry name" value="Creatinase_N"/>
    <property type="match status" value="1"/>
</dbReference>
<dbReference type="Pfam" id="PF00557">
    <property type="entry name" value="Peptidase_M24"/>
    <property type="match status" value="1"/>
</dbReference>
<dbReference type="SUPFAM" id="SSF55920">
    <property type="entry name" value="Creatinase/aminopeptidase"/>
    <property type="match status" value="1"/>
</dbReference>
<dbReference type="SUPFAM" id="SSF53092">
    <property type="entry name" value="Creatinase/prolidase N-terminal domain"/>
    <property type="match status" value="1"/>
</dbReference>
<dbReference type="PROSITE" id="PS00491">
    <property type="entry name" value="PROLINE_PEPTIDASE"/>
    <property type="match status" value="1"/>
</dbReference>
<evidence type="ECO:0000250" key="1"/>
<evidence type="ECO:0000305" key="2"/>
<sequence>MNLDKLQNWLQENGMDVAYVSSPTTINYFTGFITDPEERIFKLFAFKDAEPFLFCPALNYEEAKASAWDGDVVGYLDSEDPWSKIAEEIKKRTKDYQNWAVEKNGLTVAHYQALHAQFPDSDFSKDLSDFIAHIRLFKTESELVKLRKAGEEADFAFQIGFEALRNGVTERAVVSQIEYQLKLQKGVMQTSFDTIVQAGKNAANPHQGPSMNTVQPNELVLFDLGTMHEGYASDSSRTVAYGEPTDKMREIYEVNRTAQQAAIDAAKPGMTASELDGVARKIITDAGYGEYFIHRLGHGIGMEVHEFPSIANGNDVVLEEGMCFSIEPGIYIPGFAGVRIEDCGVLTKDGFKPFTHTSKELKVLPVKE</sequence>
<feature type="chain" id="PRO_0000185091" description="Xaa-Pro dipeptidase">
    <location>
        <begin position="1"/>
        <end position="368"/>
    </location>
</feature>
<feature type="binding site" evidence="1">
    <location>
        <position position="223"/>
    </location>
    <ligand>
        <name>Mn(2+)</name>
        <dbReference type="ChEBI" id="CHEBI:29035"/>
        <label>2</label>
    </ligand>
</feature>
<feature type="binding site" evidence="1">
    <location>
        <position position="234"/>
    </location>
    <ligand>
        <name>Mn(2+)</name>
        <dbReference type="ChEBI" id="CHEBI:29035"/>
        <label>1</label>
    </ligand>
</feature>
<feature type="binding site" evidence="1">
    <location>
        <position position="234"/>
    </location>
    <ligand>
        <name>Mn(2+)</name>
        <dbReference type="ChEBI" id="CHEBI:29035"/>
        <label>2</label>
    </ligand>
</feature>
<feature type="binding site" evidence="1">
    <location>
        <position position="298"/>
    </location>
    <ligand>
        <name>Mn(2+)</name>
        <dbReference type="ChEBI" id="CHEBI:29035"/>
        <label>1</label>
    </ligand>
</feature>
<feature type="binding site" evidence="1">
    <location>
        <position position="327"/>
    </location>
    <ligand>
        <name>Mn(2+)</name>
        <dbReference type="ChEBI" id="CHEBI:29035"/>
        <label>1</label>
    </ligand>
</feature>
<feature type="binding site" evidence="1">
    <location>
        <position position="341"/>
    </location>
    <ligand>
        <name>Mn(2+)</name>
        <dbReference type="ChEBI" id="CHEBI:29035"/>
        <label>1</label>
    </ligand>
</feature>
<feature type="binding site" evidence="1">
    <location>
        <position position="341"/>
    </location>
    <ligand>
        <name>Mn(2+)</name>
        <dbReference type="ChEBI" id="CHEBI:29035"/>
        <label>2</label>
    </ligand>
</feature>